<comment type="function">
    <text evidence="1">Molecular chaperone; assists the folding of proteins upon ATP hydrolysis. Known to play a role, in vitro, in the folding of actin and tubulin (By similarity).</text>
</comment>
<comment type="subunit">
    <text evidence="1">Heterooligomeric complex of about 850 to 900 kDa that forms two stacked rings, 12 to 16 nm in diameter.</text>
</comment>
<comment type="subcellular location">
    <subcellularLocation>
        <location evidence="1">Cytoplasm</location>
    </subcellularLocation>
</comment>
<comment type="similarity">
    <text evidence="2">Belongs to the TCP-1 chaperonin family.</text>
</comment>
<organism>
    <name type="scientific">Dictyostelium discoideum</name>
    <name type="common">Social amoeba</name>
    <dbReference type="NCBI Taxonomy" id="44689"/>
    <lineage>
        <taxon>Eukaryota</taxon>
        <taxon>Amoebozoa</taxon>
        <taxon>Evosea</taxon>
        <taxon>Eumycetozoa</taxon>
        <taxon>Dictyostelia</taxon>
        <taxon>Dictyosteliales</taxon>
        <taxon>Dictyosteliaceae</taxon>
        <taxon>Dictyostelium</taxon>
    </lineage>
</organism>
<sequence>MLSMIKQQGAAADSRRGQALLLNISAGKGLQNVLKTNLGPRGTLKMLVGGGGDIKLTKDGKVLLHEMQIQHPTAALIARTATAQDDITGDGTTTNVITIGELLKQSERYLQENIHPRIIAEGFELAKDRCLAFLEEFKQTSQDTLDRELLISIAKTSLRTKLPADLADQLTEQVVDALLLIHKPEQPLDLFMVEIMTMQHRTDGHCSLIKGLVLDHGTRHPDMPKKLTNCFILTCNVSLEYEKTEVNANFLYKDHETRSRMIDGEHKLVAAKCRQIIELKNHVCDTPDKNFVVINQKGIDPICLDMLAKAGIMGLRRAKRRNMERLTLACGGTAMNSLEDLTPDCLGHADLVYEQTLGEEKYTFVEGVKNPFSCTVLIKGPTKHQIEQIKDALRDGLRAVKNTIEDKCVVPGGGAFQIAAYADLMKFKETITGRTKLGIQAFADALLVVPKTLAQNSGFDPMDTIIKLQEEYAKGHIVGLDVESGEPMDPVSEGIFDQYSVLKQVYRSSPVIASQLLLIDEIIKAGKGMRGSSVPEGQE</sequence>
<reference key="1">
    <citation type="journal article" date="2002" name="Nature">
        <title>Sequence and analysis of chromosome 2 of Dictyostelium discoideum.</title>
        <authorList>
            <person name="Gloeckner G."/>
            <person name="Eichinger L."/>
            <person name="Szafranski K."/>
            <person name="Pachebat J.A."/>
            <person name="Bankier A.T."/>
            <person name="Dear P.H."/>
            <person name="Lehmann R."/>
            <person name="Baumgart C."/>
            <person name="Parra G."/>
            <person name="Abril J.F."/>
            <person name="Guigo R."/>
            <person name="Kumpf K."/>
            <person name="Tunggal B."/>
            <person name="Cox E.C."/>
            <person name="Quail M.A."/>
            <person name="Platzer M."/>
            <person name="Rosenthal A."/>
            <person name="Noegel A.A."/>
        </authorList>
    </citation>
    <scope>NUCLEOTIDE SEQUENCE [LARGE SCALE GENOMIC DNA]</scope>
    <source>
        <strain>AX4</strain>
    </source>
</reference>
<reference key="2">
    <citation type="journal article" date="2005" name="Nature">
        <title>The genome of the social amoeba Dictyostelium discoideum.</title>
        <authorList>
            <person name="Eichinger L."/>
            <person name="Pachebat J.A."/>
            <person name="Gloeckner G."/>
            <person name="Rajandream M.A."/>
            <person name="Sucgang R."/>
            <person name="Berriman M."/>
            <person name="Song J."/>
            <person name="Olsen R."/>
            <person name="Szafranski K."/>
            <person name="Xu Q."/>
            <person name="Tunggal B."/>
            <person name="Kummerfeld S."/>
            <person name="Madera M."/>
            <person name="Konfortov B.A."/>
            <person name="Rivero F."/>
            <person name="Bankier A.T."/>
            <person name="Lehmann R."/>
            <person name="Hamlin N."/>
            <person name="Davies R."/>
            <person name="Gaudet P."/>
            <person name="Fey P."/>
            <person name="Pilcher K."/>
            <person name="Chen G."/>
            <person name="Saunders D."/>
            <person name="Sodergren E.J."/>
            <person name="Davis P."/>
            <person name="Kerhornou A."/>
            <person name="Nie X."/>
            <person name="Hall N."/>
            <person name="Anjard C."/>
            <person name="Hemphill L."/>
            <person name="Bason N."/>
            <person name="Farbrother P."/>
            <person name="Desany B."/>
            <person name="Just E."/>
            <person name="Morio T."/>
            <person name="Rost R."/>
            <person name="Churcher C.M."/>
            <person name="Cooper J."/>
            <person name="Haydock S."/>
            <person name="van Driessche N."/>
            <person name="Cronin A."/>
            <person name="Goodhead I."/>
            <person name="Muzny D.M."/>
            <person name="Mourier T."/>
            <person name="Pain A."/>
            <person name="Lu M."/>
            <person name="Harper D."/>
            <person name="Lindsay R."/>
            <person name="Hauser H."/>
            <person name="James K.D."/>
            <person name="Quiles M."/>
            <person name="Madan Babu M."/>
            <person name="Saito T."/>
            <person name="Buchrieser C."/>
            <person name="Wardroper A."/>
            <person name="Felder M."/>
            <person name="Thangavelu M."/>
            <person name="Johnson D."/>
            <person name="Knights A."/>
            <person name="Loulseged H."/>
            <person name="Mungall K.L."/>
            <person name="Oliver K."/>
            <person name="Price C."/>
            <person name="Quail M.A."/>
            <person name="Urushihara H."/>
            <person name="Hernandez J."/>
            <person name="Rabbinowitsch E."/>
            <person name="Steffen D."/>
            <person name="Sanders M."/>
            <person name="Ma J."/>
            <person name="Kohara Y."/>
            <person name="Sharp S."/>
            <person name="Simmonds M.N."/>
            <person name="Spiegler S."/>
            <person name="Tivey A."/>
            <person name="Sugano S."/>
            <person name="White B."/>
            <person name="Walker D."/>
            <person name="Woodward J.R."/>
            <person name="Winckler T."/>
            <person name="Tanaka Y."/>
            <person name="Shaulsky G."/>
            <person name="Schleicher M."/>
            <person name="Weinstock G.M."/>
            <person name="Rosenthal A."/>
            <person name="Cox E.C."/>
            <person name="Chisholm R.L."/>
            <person name="Gibbs R.A."/>
            <person name="Loomis W.F."/>
            <person name="Platzer M."/>
            <person name="Kay R.R."/>
            <person name="Williams J.G."/>
            <person name="Dear P.H."/>
            <person name="Noegel A.A."/>
            <person name="Barrell B.G."/>
            <person name="Kuspa A."/>
        </authorList>
    </citation>
    <scope>NUCLEOTIDE SEQUENCE [LARGE SCALE GENOMIC DNA]</scope>
    <source>
        <strain>AX4</strain>
    </source>
</reference>
<reference key="3">
    <citation type="journal article" date="2006" name="Mol. Cell. Proteomics">
        <title>Proteomics fingerprinting of phagosome maturation and evidence for the role of a Galpha during uptake.</title>
        <authorList>
            <person name="Gotthardt D."/>
            <person name="Blancheteau V."/>
            <person name="Bosserhoff A."/>
            <person name="Ruppert T."/>
            <person name="Delorenzi M."/>
            <person name="Soldati T."/>
        </authorList>
    </citation>
    <scope>IDENTIFICATION BY MASS SPECTROMETRY [LARGE SCALE ANALYSIS]</scope>
    <source>
        <strain>AX2</strain>
    </source>
</reference>
<protein>
    <recommendedName>
        <fullName>T-complex protein 1 subunit zeta</fullName>
        <shortName>TCP-1-zeta</shortName>
    </recommendedName>
    <alternativeName>
        <fullName>CCT-zeta</fullName>
    </alternativeName>
</protein>
<accession>Q76NU3</accession>
<accession>Q54ZN6</accession>
<gene>
    <name type="primary">cct6</name>
    <name type="ORF">DDB_G0277493</name>
</gene>
<keyword id="KW-0067">ATP-binding</keyword>
<keyword id="KW-0143">Chaperone</keyword>
<keyword id="KW-0963">Cytoplasm</keyword>
<keyword id="KW-0547">Nucleotide-binding</keyword>
<keyword id="KW-1185">Reference proteome</keyword>
<feature type="chain" id="PRO_0000327898" description="T-complex protein 1 subunit zeta">
    <location>
        <begin position="1"/>
        <end position="539"/>
    </location>
</feature>
<evidence type="ECO:0000250" key="1"/>
<evidence type="ECO:0000305" key="2"/>
<dbReference type="EMBL" id="AAFI02000020">
    <property type="protein sequence ID" value="EAL68709.1"/>
    <property type="molecule type" value="Genomic_DNA"/>
</dbReference>
<dbReference type="RefSeq" id="XP_642606.1">
    <property type="nucleotide sequence ID" value="XM_637514.1"/>
</dbReference>
<dbReference type="SMR" id="Q76NU3"/>
<dbReference type="FunCoup" id="Q76NU3">
    <property type="interactions" value="1041"/>
</dbReference>
<dbReference type="STRING" id="44689.Q76NU3"/>
<dbReference type="PaxDb" id="44689-DDB0233995"/>
<dbReference type="EnsemblProtists" id="EAL68709">
    <property type="protein sequence ID" value="EAL68709"/>
    <property type="gene ID" value="DDB_G0277493"/>
</dbReference>
<dbReference type="GeneID" id="8621023"/>
<dbReference type="KEGG" id="ddi:DDB_G0277493"/>
<dbReference type="dictyBase" id="DDB_G0277493">
    <property type="gene designation" value="cct6"/>
</dbReference>
<dbReference type="VEuPathDB" id="AmoebaDB:DDB_G0277493"/>
<dbReference type="eggNOG" id="KOG0359">
    <property type="taxonomic scope" value="Eukaryota"/>
</dbReference>
<dbReference type="HOGENOM" id="CLU_008891_3_1_1"/>
<dbReference type="InParanoid" id="Q76NU3"/>
<dbReference type="OMA" id="LHPRIMT"/>
<dbReference type="PhylomeDB" id="Q76NU3"/>
<dbReference type="BRENDA" id="3.6.4.B10">
    <property type="organism ID" value="1939"/>
</dbReference>
<dbReference type="Reactome" id="R-DDI-390471">
    <property type="pathway name" value="Association of TriC/CCT with target proteins during biosynthesis"/>
</dbReference>
<dbReference type="Reactome" id="R-DDI-6814122">
    <property type="pathway name" value="Cooperation of PDCL (PhLP1) and TRiC/CCT in G-protein beta folding"/>
</dbReference>
<dbReference type="Reactome" id="R-DDI-9013418">
    <property type="pathway name" value="RHOBTB2 GTPase cycle"/>
</dbReference>
<dbReference type="PRO" id="PR:Q76NU3"/>
<dbReference type="Proteomes" id="UP000002195">
    <property type="component" value="Chromosome 2"/>
</dbReference>
<dbReference type="GO" id="GO:0005832">
    <property type="term" value="C:chaperonin-containing T-complex"/>
    <property type="evidence" value="ECO:0000250"/>
    <property type="project" value="dictyBase"/>
</dbReference>
<dbReference type="GO" id="GO:0045335">
    <property type="term" value="C:phagocytic vesicle"/>
    <property type="evidence" value="ECO:0007005"/>
    <property type="project" value="dictyBase"/>
</dbReference>
<dbReference type="GO" id="GO:0005524">
    <property type="term" value="F:ATP binding"/>
    <property type="evidence" value="ECO:0007669"/>
    <property type="project" value="UniProtKB-KW"/>
</dbReference>
<dbReference type="GO" id="GO:0016887">
    <property type="term" value="F:ATP hydrolysis activity"/>
    <property type="evidence" value="ECO:0007669"/>
    <property type="project" value="InterPro"/>
</dbReference>
<dbReference type="GO" id="GO:0140662">
    <property type="term" value="F:ATP-dependent protein folding chaperone"/>
    <property type="evidence" value="ECO:0007669"/>
    <property type="project" value="InterPro"/>
</dbReference>
<dbReference type="GO" id="GO:0051082">
    <property type="term" value="F:unfolded protein binding"/>
    <property type="evidence" value="ECO:0000318"/>
    <property type="project" value="GO_Central"/>
</dbReference>
<dbReference type="GO" id="GO:0006457">
    <property type="term" value="P:protein folding"/>
    <property type="evidence" value="ECO:0000318"/>
    <property type="project" value="GO_Central"/>
</dbReference>
<dbReference type="CDD" id="cd03342">
    <property type="entry name" value="TCP1_zeta"/>
    <property type="match status" value="1"/>
</dbReference>
<dbReference type="FunFam" id="1.10.560.10:FF:000038">
    <property type="entry name" value="Chaperonin containing TCP1 subunit 6B"/>
    <property type="match status" value="1"/>
</dbReference>
<dbReference type="FunFam" id="1.10.560.10:FF:000058">
    <property type="entry name" value="T-complex protein 1 subunit zeta"/>
    <property type="match status" value="1"/>
</dbReference>
<dbReference type="FunFam" id="3.30.260.10:FF:000017">
    <property type="entry name" value="T-complex protein 1 subunit zeta"/>
    <property type="match status" value="1"/>
</dbReference>
<dbReference type="FunFam" id="3.50.7.10:FF:000004">
    <property type="entry name" value="T-complex protein 1 subunit zeta"/>
    <property type="match status" value="1"/>
</dbReference>
<dbReference type="Gene3D" id="3.50.7.10">
    <property type="entry name" value="GroEL"/>
    <property type="match status" value="1"/>
</dbReference>
<dbReference type="Gene3D" id="1.10.560.10">
    <property type="entry name" value="GroEL-like equatorial domain"/>
    <property type="match status" value="1"/>
</dbReference>
<dbReference type="Gene3D" id="3.30.260.10">
    <property type="entry name" value="TCP-1-like chaperonin intermediate domain"/>
    <property type="match status" value="1"/>
</dbReference>
<dbReference type="InterPro" id="IPR012722">
    <property type="entry name" value="Chap_CCT_zeta"/>
</dbReference>
<dbReference type="InterPro" id="IPR017998">
    <property type="entry name" value="Chaperone_TCP-1"/>
</dbReference>
<dbReference type="InterPro" id="IPR002194">
    <property type="entry name" value="Chaperonin_TCP-1_CS"/>
</dbReference>
<dbReference type="InterPro" id="IPR002423">
    <property type="entry name" value="Cpn60/GroEL/TCP-1"/>
</dbReference>
<dbReference type="InterPro" id="IPR027409">
    <property type="entry name" value="GroEL-like_apical_dom_sf"/>
</dbReference>
<dbReference type="InterPro" id="IPR027413">
    <property type="entry name" value="GROEL-like_equatorial_sf"/>
</dbReference>
<dbReference type="InterPro" id="IPR027410">
    <property type="entry name" value="TCP-1-like_intermed_sf"/>
</dbReference>
<dbReference type="InterPro" id="IPR053374">
    <property type="entry name" value="TCP-1_chaperonin"/>
</dbReference>
<dbReference type="NCBIfam" id="TIGR02347">
    <property type="entry name" value="chap_CCT_zeta"/>
    <property type="match status" value="1"/>
</dbReference>
<dbReference type="NCBIfam" id="NF041083">
    <property type="entry name" value="thermosome_beta"/>
    <property type="match status" value="1"/>
</dbReference>
<dbReference type="PANTHER" id="PTHR11353">
    <property type="entry name" value="CHAPERONIN"/>
    <property type="match status" value="1"/>
</dbReference>
<dbReference type="Pfam" id="PF00118">
    <property type="entry name" value="Cpn60_TCP1"/>
    <property type="match status" value="1"/>
</dbReference>
<dbReference type="PRINTS" id="PR00304">
    <property type="entry name" value="TCOMPLEXTCP1"/>
</dbReference>
<dbReference type="SUPFAM" id="SSF52029">
    <property type="entry name" value="GroEL apical domain-like"/>
    <property type="match status" value="1"/>
</dbReference>
<dbReference type="SUPFAM" id="SSF48592">
    <property type="entry name" value="GroEL equatorial domain-like"/>
    <property type="match status" value="1"/>
</dbReference>
<dbReference type="SUPFAM" id="SSF54849">
    <property type="entry name" value="GroEL-intermediate domain like"/>
    <property type="match status" value="1"/>
</dbReference>
<dbReference type="PROSITE" id="PS00750">
    <property type="entry name" value="TCP1_1"/>
    <property type="match status" value="1"/>
</dbReference>
<dbReference type="PROSITE" id="PS00751">
    <property type="entry name" value="TCP1_2"/>
    <property type="match status" value="1"/>
</dbReference>
<dbReference type="PROSITE" id="PS00995">
    <property type="entry name" value="TCP1_3"/>
    <property type="match status" value="1"/>
</dbReference>
<proteinExistence type="evidence at protein level"/>
<name>TCPZ_DICDI</name>